<gene>
    <name evidence="1" type="primary">hemA</name>
    <name type="ordered locus">Pfl01_4749</name>
</gene>
<dbReference type="EC" id="1.2.1.70" evidence="1"/>
<dbReference type="EMBL" id="CP000094">
    <property type="protein sequence ID" value="ABA76486.1"/>
    <property type="molecule type" value="Genomic_DNA"/>
</dbReference>
<dbReference type="RefSeq" id="WP_007951716.1">
    <property type="nucleotide sequence ID" value="NC_007492.2"/>
</dbReference>
<dbReference type="SMR" id="Q3K6W8"/>
<dbReference type="KEGG" id="pfo:Pfl01_4749"/>
<dbReference type="eggNOG" id="COG0373">
    <property type="taxonomic scope" value="Bacteria"/>
</dbReference>
<dbReference type="HOGENOM" id="CLU_035113_2_2_6"/>
<dbReference type="UniPathway" id="UPA00251">
    <property type="reaction ID" value="UER00316"/>
</dbReference>
<dbReference type="Proteomes" id="UP000002704">
    <property type="component" value="Chromosome"/>
</dbReference>
<dbReference type="GO" id="GO:0008883">
    <property type="term" value="F:glutamyl-tRNA reductase activity"/>
    <property type="evidence" value="ECO:0007669"/>
    <property type="project" value="UniProtKB-UniRule"/>
</dbReference>
<dbReference type="GO" id="GO:0050661">
    <property type="term" value="F:NADP binding"/>
    <property type="evidence" value="ECO:0007669"/>
    <property type="project" value="InterPro"/>
</dbReference>
<dbReference type="GO" id="GO:0019353">
    <property type="term" value="P:protoporphyrinogen IX biosynthetic process from glutamate"/>
    <property type="evidence" value="ECO:0007669"/>
    <property type="project" value="TreeGrafter"/>
</dbReference>
<dbReference type="CDD" id="cd05213">
    <property type="entry name" value="NAD_bind_Glutamyl_tRNA_reduct"/>
    <property type="match status" value="1"/>
</dbReference>
<dbReference type="FunFam" id="3.30.460.30:FF:000001">
    <property type="entry name" value="Glutamyl-tRNA reductase"/>
    <property type="match status" value="1"/>
</dbReference>
<dbReference type="FunFam" id="3.40.50.720:FF:000031">
    <property type="entry name" value="Glutamyl-tRNA reductase"/>
    <property type="match status" value="1"/>
</dbReference>
<dbReference type="Gene3D" id="3.30.460.30">
    <property type="entry name" value="Glutamyl-tRNA reductase, N-terminal domain"/>
    <property type="match status" value="1"/>
</dbReference>
<dbReference type="Gene3D" id="3.40.50.720">
    <property type="entry name" value="NAD(P)-binding Rossmann-like Domain"/>
    <property type="match status" value="1"/>
</dbReference>
<dbReference type="HAMAP" id="MF_00087">
    <property type="entry name" value="Glu_tRNA_reductase"/>
    <property type="match status" value="1"/>
</dbReference>
<dbReference type="InterPro" id="IPR000343">
    <property type="entry name" value="4pyrrol_synth_GluRdtase"/>
</dbReference>
<dbReference type="InterPro" id="IPR015896">
    <property type="entry name" value="4pyrrol_synth_GluRdtase_dimer"/>
</dbReference>
<dbReference type="InterPro" id="IPR015895">
    <property type="entry name" value="4pyrrol_synth_GluRdtase_N"/>
</dbReference>
<dbReference type="InterPro" id="IPR018214">
    <property type="entry name" value="GluRdtase_CS"/>
</dbReference>
<dbReference type="InterPro" id="IPR036453">
    <property type="entry name" value="GluRdtase_dimer_dom_sf"/>
</dbReference>
<dbReference type="InterPro" id="IPR036343">
    <property type="entry name" value="GluRdtase_N_sf"/>
</dbReference>
<dbReference type="InterPro" id="IPR036291">
    <property type="entry name" value="NAD(P)-bd_dom_sf"/>
</dbReference>
<dbReference type="InterPro" id="IPR006151">
    <property type="entry name" value="Shikm_DH/Glu-tRNA_Rdtase"/>
</dbReference>
<dbReference type="NCBIfam" id="TIGR01035">
    <property type="entry name" value="hemA"/>
    <property type="match status" value="1"/>
</dbReference>
<dbReference type="PANTHER" id="PTHR43013">
    <property type="entry name" value="GLUTAMYL-TRNA REDUCTASE"/>
    <property type="match status" value="1"/>
</dbReference>
<dbReference type="PANTHER" id="PTHR43013:SF1">
    <property type="entry name" value="GLUTAMYL-TRNA REDUCTASE"/>
    <property type="match status" value="1"/>
</dbReference>
<dbReference type="Pfam" id="PF00745">
    <property type="entry name" value="GlutR_dimer"/>
    <property type="match status" value="1"/>
</dbReference>
<dbReference type="Pfam" id="PF05201">
    <property type="entry name" value="GlutR_N"/>
    <property type="match status" value="1"/>
</dbReference>
<dbReference type="Pfam" id="PF01488">
    <property type="entry name" value="Shikimate_DH"/>
    <property type="match status" value="1"/>
</dbReference>
<dbReference type="PIRSF" id="PIRSF000445">
    <property type="entry name" value="4pyrrol_synth_GluRdtase"/>
    <property type="match status" value="1"/>
</dbReference>
<dbReference type="SUPFAM" id="SSF69742">
    <property type="entry name" value="Glutamyl tRNA-reductase catalytic, N-terminal domain"/>
    <property type="match status" value="1"/>
</dbReference>
<dbReference type="SUPFAM" id="SSF69075">
    <property type="entry name" value="Glutamyl tRNA-reductase dimerization domain"/>
    <property type="match status" value="1"/>
</dbReference>
<dbReference type="SUPFAM" id="SSF51735">
    <property type="entry name" value="NAD(P)-binding Rossmann-fold domains"/>
    <property type="match status" value="1"/>
</dbReference>
<dbReference type="PROSITE" id="PS00747">
    <property type="entry name" value="GLUTR"/>
    <property type="match status" value="1"/>
</dbReference>
<organism>
    <name type="scientific">Pseudomonas fluorescens (strain Pf0-1)</name>
    <dbReference type="NCBI Taxonomy" id="205922"/>
    <lineage>
        <taxon>Bacteria</taxon>
        <taxon>Pseudomonadati</taxon>
        <taxon>Pseudomonadota</taxon>
        <taxon>Gammaproteobacteria</taxon>
        <taxon>Pseudomonadales</taxon>
        <taxon>Pseudomonadaceae</taxon>
        <taxon>Pseudomonas</taxon>
    </lineage>
</organism>
<reference key="1">
    <citation type="journal article" date="2009" name="Genome Biol.">
        <title>Genomic and genetic analyses of diversity and plant interactions of Pseudomonas fluorescens.</title>
        <authorList>
            <person name="Silby M.W."/>
            <person name="Cerdeno-Tarraga A.M."/>
            <person name="Vernikos G.S."/>
            <person name="Giddens S.R."/>
            <person name="Jackson R.W."/>
            <person name="Preston G.M."/>
            <person name="Zhang X.-X."/>
            <person name="Moon C.D."/>
            <person name="Gehrig S.M."/>
            <person name="Godfrey S.A.C."/>
            <person name="Knight C.G."/>
            <person name="Malone J.G."/>
            <person name="Robinson Z."/>
            <person name="Spiers A.J."/>
            <person name="Harris S."/>
            <person name="Challis G.L."/>
            <person name="Yaxley A.M."/>
            <person name="Harris D."/>
            <person name="Seeger K."/>
            <person name="Murphy L."/>
            <person name="Rutter S."/>
            <person name="Squares R."/>
            <person name="Quail M.A."/>
            <person name="Saunders E."/>
            <person name="Mavromatis K."/>
            <person name="Brettin T.S."/>
            <person name="Bentley S.D."/>
            <person name="Hothersall J."/>
            <person name="Stephens E."/>
            <person name="Thomas C.M."/>
            <person name="Parkhill J."/>
            <person name="Levy S.B."/>
            <person name="Rainey P.B."/>
            <person name="Thomson N.R."/>
        </authorList>
    </citation>
    <scope>NUCLEOTIDE SEQUENCE [LARGE SCALE GENOMIC DNA]</scope>
    <source>
        <strain>Pf0-1</strain>
    </source>
</reference>
<feature type="chain" id="PRO_1000004673" description="Glutamyl-tRNA reductase">
    <location>
        <begin position="1"/>
        <end position="428"/>
    </location>
</feature>
<feature type="active site" description="Nucleophile" evidence="1">
    <location>
        <position position="50"/>
    </location>
</feature>
<feature type="binding site" evidence="1">
    <location>
        <begin position="49"/>
        <end position="52"/>
    </location>
    <ligand>
        <name>substrate</name>
    </ligand>
</feature>
<feature type="binding site" evidence="1">
    <location>
        <position position="107"/>
    </location>
    <ligand>
        <name>substrate</name>
    </ligand>
</feature>
<feature type="binding site" evidence="1">
    <location>
        <begin position="112"/>
        <end position="114"/>
    </location>
    <ligand>
        <name>substrate</name>
    </ligand>
</feature>
<feature type="binding site" evidence="1">
    <location>
        <position position="118"/>
    </location>
    <ligand>
        <name>substrate</name>
    </ligand>
</feature>
<feature type="binding site" evidence="1">
    <location>
        <begin position="187"/>
        <end position="192"/>
    </location>
    <ligand>
        <name>NADP(+)</name>
        <dbReference type="ChEBI" id="CHEBI:58349"/>
    </ligand>
</feature>
<feature type="site" description="Important for activity" evidence="1">
    <location>
        <position position="97"/>
    </location>
</feature>
<name>HEM1_PSEPF</name>
<accession>Q3K6W8</accession>
<sequence length="428" mass="46686">MAFLALGINHKTASVDVRERVAFTPEQLVEALQQLCRLTDSREAAILSTCNRSELYIEQDQLSADIVLRWLADYHHLSLDELRASAYVHEDDAAVRHMMRVASGLDSLVLGEPQILGQMKSAYAVAREAGTIGPLLGRLFQATFNAAKQVRTDTAIGENPVSVAFAAVSLAKQIFSDLQRSQALLIGAGETITLVARHLHELGVKRIVVANRTLERASLLAEQFGAHAVLLSDIPAELVRSDIVISSTASQLPILGKGAVESALKLRKHKPIFMVDIAVPRDIEPEVGELDDVYLYSVDDLHEVVAENLKSRQGAAQAAEEMVSVGADDFMVRLRELAAVDVLKAYRQQSERLRDEELQKALRLLANGGNAEDVLGQLARGLTNKLLHAPSVQLKKLSAEGRLDALAMAQELFALEGSPDSFSDKKPQ</sequence>
<protein>
    <recommendedName>
        <fullName evidence="1">Glutamyl-tRNA reductase</fullName>
        <shortName evidence="1">GluTR</shortName>
        <ecNumber evidence="1">1.2.1.70</ecNumber>
    </recommendedName>
</protein>
<proteinExistence type="inferred from homology"/>
<keyword id="KW-0521">NADP</keyword>
<keyword id="KW-0560">Oxidoreductase</keyword>
<keyword id="KW-0627">Porphyrin biosynthesis</keyword>
<evidence type="ECO:0000255" key="1">
    <source>
        <dbReference type="HAMAP-Rule" id="MF_00087"/>
    </source>
</evidence>
<comment type="function">
    <text evidence="1">Catalyzes the NADPH-dependent reduction of glutamyl-tRNA(Glu) to glutamate 1-semialdehyde (GSA).</text>
</comment>
<comment type="catalytic activity">
    <reaction evidence="1">
        <text>(S)-4-amino-5-oxopentanoate + tRNA(Glu) + NADP(+) = L-glutamyl-tRNA(Glu) + NADPH + H(+)</text>
        <dbReference type="Rhea" id="RHEA:12344"/>
        <dbReference type="Rhea" id="RHEA-COMP:9663"/>
        <dbReference type="Rhea" id="RHEA-COMP:9680"/>
        <dbReference type="ChEBI" id="CHEBI:15378"/>
        <dbReference type="ChEBI" id="CHEBI:57501"/>
        <dbReference type="ChEBI" id="CHEBI:57783"/>
        <dbReference type="ChEBI" id="CHEBI:58349"/>
        <dbReference type="ChEBI" id="CHEBI:78442"/>
        <dbReference type="ChEBI" id="CHEBI:78520"/>
        <dbReference type="EC" id="1.2.1.70"/>
    </reaction>
</comment>
<comment type="pathway">
    <text evidence="1">Porphyrin-containing compound metabolism; protoporphyrin-IX biosynthesis; 5-aminolevulinate from L-glutamyl-tRNA(Glu): step 1/2.</text>
</comment>
<comment type="subunit">
    <text evidence="1">Homodimer.</text>
</comment>
<comment type="domain">
    <text evidence="1">Possesses an unusual extended V-shaped dimeric structure with each monomer consisting of three distinct domains arranged along a curved 'spinal' alpha-helix. The N-terminal catalytic domain specifically recognizes the glutamate moiety of the substrate. The second domain is the NADPH-binding domain, and the third C-terminal domain is responsible for dimerization.</text>
</comment>
<comment type="miscellaneous">
    <text evidence="1">During catalysis, the active site Cys acts as a nucleophile attacking the alpha-carbonyl group of tRNA-bound glutamate with the formation of a thioester intermediate between enzyme and glutamate, and the concomitant release of tRNA(Glu). The thioester intermediate is finally reduced by direct hydride transfer from NADPH, to form the product GSA.</text>
</comment>
<comment type="similarity">
    <text evidence="1">Belongs to the glutamyl-tRNA reductase family.</text>
</comment>